<keyword id="KW-0210">Decarboxylase</keyword>
<keyword id="KW-0456">Lyase</keyword>
<keyword id="KW-0460">Magnesium</keyword>
<keyword id="KW-0479">Metal-binding</keyword>
<keyword id="KW-0620">Polyamine biosynthesis</keyword>
<keyword id="KW-0663">Pyridoxal phosphate</keyword>
<keyword id="KW-1185">Reference proteome</keyword>
<keyword id="KW-0745">Spermidine biosynthesis</keyword>
<accession>Q8YRP3</accession>
<comment type="function">
    <text evidence="1">Catalyzes the biosynthesis of agmatine from arginine.</text>
</comment>
<comment type="catalytic activity">
    <reaction evidence="1">
        <text>L-arginine + H(+) = agmatine + CO2</text>
        <dbReference type="Rhea" id="RHEA:17641"/>
        <dbReference type="ChEBI" id="CHEBI:15378"/>
        <dbReference type="ChEBI" id="CHEBI:16526"/>
        <dbReference type="ChEBI" id="CHEBI:32682"/>
        <dbReference type="ChEBI" id="CHEBI:58145"/>
        <dbReference type="EC" id="4.1.1.19"/>
    </reaction>
</comment>
<comment type="cofactor">
    <cofactor evidence="1">
        <name>Mg(2+)</name>
        <dbReference type="ChEBI" id="CHEBI:18420"/>
    </cofactor>
</comment>
<comment type="cofactor">
    <cofactor evidence="1">
        <name>pyridoxal 5'-phosphate</name>
        <dbReference type="ChEBI" id="CHEBI:597326"/>
    </cofactor>
</comment>
<comment type="similarity">
    <text evidence="1">Belongs to the Orn/Lys/Arg decarboxylase class-II family. SpeA subfamily.</text>
</comment>
<evidence type="ECO:0000255" key="1">
    <source>
        <dbReference type="HAMAP-Rule" id="MF_01417"/>
    </source>
</evidence>
<evidence type="ECO:0000256" key="2">
    <source>
        <dbReference type="SAM" id="MobiDB-lite"/>
    </source>
</evidence>
<feature type="chain" id="PRO_0000149956" description="Biosynthetic arginine decarboxylase">
    <location>
        <begin position="1"/>
        <end position="679"/>
    </location>
</feature>
<feature type="region of interest" description="Disordered" evidence="2">
    <location>
        <begin position="1"/>
        <end position="43"/>
    </location>
</feature>
<feature type="binding site" evidence="1">
    <location>
        <begin position="331"/>
        <end position="341"/>
    </location>
    <ligand>
        <name>substrate</name>
    </ligand>
</feature>
<feature type="modified residue" description="N6-(pyridoxal phosphate)lysine" evidence="1">
    <location>
        <position position="149"/>
    </location>
</feature>
<organism>
    <name type="scientific">Nostoc sp. (strain PCC 7120 / SAG 25.82 / UTEX 2576)</name>
    <dbReference type="NCBI Taxonomy" id="103690"/>
    <lineage>
        <taxon>Bacteria</taxon>
        <taxon>Bacillati</taxon>
        <taxon>Cyanobacteriota</taxon>
        <taxon>Cyanophyceae</taxon>
        <taxon>Nostocales</taxon>
        <taxon>Nostocaceae</taxon>
        <taxon>Nostoc</taxon>
    </lineage>
</organism>
<protein>
    <recommendedName>
        <fullName evidence="1">Biosynthetic arginine decarboxylase</fullName>
        <shortName evidence="1">ADC</shortName>
        <ecNumber evidence="1">4.1.1.19</ecNumber>
    </recommendedName>
</protein>
<dbReference type="EC" id="4.1.1.19" evidence="1"/>
<dbReference type="EMBL" id="BA000019">
    <property type="protein sequence ID" value="BAB75100.1"/>
    <property type="molecule type" value="Genomic_DNA"/>
</dbReference>
<dbReference type="PIR" id="AB2231">
    <property type="entry name" value="AB2231"/>
</dbReference>
<dbReference type="SMR" id="Q8YRP3"/>
<dbReference type="STRING" id="103690.gene:10495440"/>
<dbReference type="KEGG" id="ana:all3401"/>
<dbReference type="eggNOG" id="COG1166">
    <property type="taxonomic scope" value="Bacteria"/>
</dbReference>
<dbReference type="BRENDA" id="4.1.1.19">
    <property type="organism ID" value="8113"/>
</dbReference>
<dbReference type="Proteomes" id="UP000002483">
    <property type="component" value="Chromosome"/>
</dbReference>
<dbReference type="GO" id="GO:0008792">
    <property type="term" value="F:arginine decarboxylase activity"/>
    <property type="evidence" value="ECO:0007669"/>
    <property type="project" value="UniProtKB-UniRule"/>
</dbReference>
<dbReference type="GO" id="GO:0046872">
    <property type="term" value="F:metal ion binding"/>
    <property type="evidence" value="ECO:0007669"/>
    <property type="project" value="UniProtKB-KW"/>
</dbReference>
<dbReference type="GO" id="GO:0006527">
    <property type="term" value="P:arginine catabolic process"/>
    <property type="evidence" value="ECO:0007669"/>
    <property type="project" value="InterPro"/>
</dbReference>
<dbReference type="GO" id="GO:0008295">
    <property type="term" value="P:spermidine biosynthetic process"/>
    <property type="evidence" value="ECO:0007669"/>
    <property type="project" value="UniProtKB-UniRule"/>
</dbReference>
<dbReference type="CDD" id="cd06830">
    <property type="entry name" value="PLPDE_III_ADC"/>
    <property type="match status" value="1"/>
</dbReference>
<dbReference type="FunFam" id="1.20.58.930:FF:000002">
    <property type="entry name" value="Biosynthetic arginine decarboxylase"/>
    <property type="match status" value="1"/>
</dbReference>
<dbReference type="FunFam" id="3.20.20.10:FF:000001">
    <property type="entry name" value="Biosynthetic arginine decarboxylase"/>
    <property type="match status" value="1"/>
</dbReference>
<dbReference type="Gene3D" id="1.10.287.3440">
    <property type="match status" value="1"/>
</dbReference>
<dbReference type="Gene3D" id="1.20.58.930">
    <property type="match status" value="1"/>
</dbReference>
<dbReference type="Gene3D" id="3.20.20.10">
    <property type="entry name" value="Alanine racemase"/>
    <property type="match status" value="1"/>
</dbReference>
<dbReference type="Gene3D" id="2.40.37.10">
    <property type="entry name" value="Lyase, Ornithine Decarboxylase, Chain A, domain 1"/>
    <property type="match status" value="1"/>
</dbReference>
<dbReference type="HAMAP" id="MF_01417">
    <property type="entry name" value="SpeA"/>
    <property type="match status" value="1"/>
</dbReference>
<dbReference type="InterPro" id="IPR009006">
    <property type="entry name" value="Ala_racemase/Decarboxylase_C"/>
</dbReference>
<dbReference type="InterPro" id="IPR040634">
    <property type="entry name" value="Arg_decarb_HB"/>
</dbReference>
<dbReference type="InterPro" id="IPR041128">
    <property type="entry name" value="Arg_decarbox_C"/>
</dbReference>
<dbReference type="InterPro" id="IPR002985">
    <property type="entry name" value="Arg_decrbxlase"/>
</dbReference>
<dbReference type="InterPro" id="IPR022657">
    <property type="entry name" value="De-COase2_CS"/>
</dbReference>
<dbReference type="InterPro" id="IPR022644">
    <property type="entry name" value="De-COase2_N"/>
</dbReference>
<dbReference type="InterPro" id="IPR022653">
    <property type="entry name" value="De-COase2_pyr-phos_BS"/>
</dbReference>
<dbReference type="InterPro" id="IPR000183">
    <property type="entry name" value="Orn/DAP/Arg_de-COase"/>
</dbReference>
<dbReference type="InterPro" id="IPR029066">
    <property type="entry name" value="PLP-binding_barrel"/>
</dbReference>
<dbReference type="NCBIfam" id="NF003763">
    <property type="entry name" value="PRK05354.1"/>
    <property type="match status" value="1"/>
</dbReference>
<dbReference type="NCBIfam" id="TIGR01273">
    <property type="entry name" value="speA"/>
    <property type="match status" value="1"/>
</dbReference>
<dbReference type="PANTHER" id="PTHR43295">
    <property type="entry name" value="ARGININE DECARBOXYLASE"/>
    <property type="match status" value="1"/>
</dbReference>
<dbReference type="PANTHER" id="PTHR43295:SF9">
    <property type="entry name" value="BIOSYNTHETIC ARGININE DECARBOXYLASE"/>
    <property type="match status" value="1"/>
</dbReference>
<dbReference type="Pfam" id="PF17810">
    <property type="entry name" value="Arg_decarb_HB"/>
    <property type="match status" value="1"/>
</dbReference>
<dbReference type="Pfam" id="PF17944">
    <property type="entry name" value="Arg_decarbox_C"/>
    <property type="match status" value="1"/>
</dbReference>
<dbReference type="Pfam" id="PF02784">
    <property type="entry name" value="Orn_Arg_deC_N"/>
    <property type="match status" value="1"/>
</dbReference>
<dbReference type="PIRSF" id="PIRSF001336">
    <property type="entry name" value="Arg_decrbxlase"/>
    <property type="match status" value="1"/>
</dbReference>
<dbReference type="PRINTS" id="PR01180">
    <property type="entry name" value="ARGDCRBXLASE"/>
</dbReference>
<dbReference type="PRINTS" id="PR01179">
    <property type="entry name" value="ODADCRBXLASE"/>
</dbReference>
<dbReference type="SUPFAM" id="SSF50621">
    <property type="entry name" value="Alanine racemase C-terminal domain-like"/>
    <property type="match status" value="1"/>
</dbReference>
<dbReference type="SUPFAM" id="SSF51419">
    <property type="entry name" value="PLP-binding barrel"/>
    <property type="match status" value="1"/>
</dbReference>
<dbReference type="PROSITE" id="PS00878">
    <property type="entry name" value="ODR_DC_2_1"/>
    <property type="match status" value="1"/>
</dbReference>
<dbReference type="PROSITE" id="PS00879">
    <property type="entry name" value="ODR_DC_2_2"/>
    <property type="match status" value="1"/>
</dbReference>
<gene>
    <name evidence="1" type="primary">speA</name>
    <name type="ordered locus">all3401</name>
</gene>
<proteinExistence type="inferred from homology"/>
<name>SPEA_NOSS1</name>
<reference key="1">
    <citation type="journal article" date="2001" name="DNA Res.">
        <title>Complete genomic sequence of the filamentous nitrogen-fixing cyanobacterium Anabaena sp. strain PCC 7120.</title>
        <authorList>
            <person name="Kaneko T."/>
            <person name="Nakamura Y."/>
            <person name="Wolk C.P."/>
            <person name="Kuritz T."/>
            <person name="Sasamoto S."/>
            <person name="Watanabe A."/>
            <person name="Iriguchi M."/>
            <person name="Ishikawa A."/>
            <person name="Kawashima K."/>
            <person name="Kimura T."/>
            <person name="Kishida Y."/>
            <person name="Kohara M."/>
            <person name="Matsumoto M."/>
            <person name="Matsuno A."/>
            <person name="Muraki A."/>
            <person name="Nakazaki N."/>
            <person name="Shimpo S."/>
            <person name="Sugimoto M."/>
            <person name="Takazawa M."/>
            <person name="Yamada M."/>
            <person name="Yasuda M."/>
            <person name="Tabata S."/>
        </authorList>
    </citation>
    <scope>NUCLEOTIDE SEQUENCE [LARGE SCALE GENOMIC DNA]</scope>
    <source>
        <strain>PCC 7120 / SAG 25.82 / UTEX 2576</strain>
    </source>
</reference>
<sequence>MKHRGQEEMGVESTATSDEVVKVPANGNKLEGKNHKQKKLLPTNTPGDVSRVWKIEDSEALYRIEGWGQPYFSINAAGHVTVSPKGDRGGSLDLFELVNALKQRSLGLPLLIRFSDILEDRIERLNACFAKAIARYNYPGVYRGVFPVKCNQQRHLIEDLVRFGRPHQFGLEAGSKPELMIALALLDTPGSLLICNGYKDREYVETAMLSQRLGQTPIIVLEQVEEVDLVIAASHQLGIKPILGVRAKLSTQGMGRWGTSTGDRAKFGLTIPEIIQAVDKLRDADLLDSLQLMHFHIGSQISAINVIKDAIQEASRIYVELASLGANMKYLDVGGGLGVDYDGSQTNFYASKNYNMQNYANDIVAELKDTCAEKQIPVPTLISESGRAIASHQSVLIFDVLSTSDVPRDNPEPPKEGESPVINYLWETYQSINKENYQEFYHDATQFKEEAISRFNLGILRLRERAKAERLYWACCQKILDIIRQHDYVPDELEDLEKIMASIYYINLSVFQSAPDCWAIDQLFPIMPIHRLDEEPTQRGILADLTCDSDGKIDRFIDLRDVKSVLELHPFQPGEPYYMGMFLNGAYQEIMGNLHNLFGDTNAVHIQLTPKGYQIEHVVKGDTMSEVVSYVQYDSEDMVENIRQRCERALEEKRITLAESQRLLQTYEQSLRRYTYLNS</sequence>